<evidence type="ECO:0000255" key="1">
    <source>
        <dbReference type="HAMAP-Rule" id="MF_01310"/>
    </source>
</evidence>
<evidence type="ECO:0000256" key="2">
    <source>
        <dbReference type="SAM" id="MobiDB-lite"/>
    </source>
</evidence>
<evidence type="ECO:0000305" key="3"/>
<comment type="subunit">
    <text evidence="1">Part of the 30S ribosomal subunit.</text>
</comment>
<comment type="subcellular location">
    <subcellularLocation>
        <location>Plastid</location>
        <location>Chloroplast</location>
    </subcellularLocation>
</comment>
<comment type="similarity">
    <text evidence="1">Belongs to the universal ribosomal protein uS11 family.</text>
</comment>
<keyword id="KW-0150">Chloroplast</keyword>
<keyword id="KW-0934">Plastid</keyword>
<keyword id="KW-0687">Ribonucleoprotein</keyword>
<keyword id="KW-0689">Ribosomal protein</keyword>
<keyword id="KW-0694">RNA-binding</keyword>
<keyword id="KW-0699">rRNA-binding</keyword>
<name>RR11_PEA</name>
<organism>
    <name type="scientific">Pisum sativum</name>
    <name type="common">Garden pea</name>
    <name type="synonym">Lathyrus oleraceus</name>
    <dbReference type="NCBI Taxonomy" id="3888"/>
    <lineage>
        <taxon>Eukaryota</taxon>
        <taxon>Viridiplantae</taxon>
        <taxon>Streptophyta</taxon>
        <taxon>Embryophyta</taxon>
        <taxon>Tracheophyta</taxon>
        <taxon>Spermatophyta</taxon>
        <taxon>Magnoliopsida</taxon>
        <taxon>eudicotyledons</taxon>
        <taxon>Gunneridae</taxon>
        <taxon>Pentapetalae</taxon>
        <taxon>rosids</taxon>
        <taxon>fabids</taxon>
        <taxon>Fabales</taxon>
        <taxon>Fabaceae</taxon>
        <taxon>Papilionoideae</taxon>
        <taxon>50 kb inversion clade</taxon>
        <taxon>NPAAA clade</taxon>
        <taxon>Hologalegina</taxon>
        <taxon>IRL clade</taxon>
        <taxon>Fabeae</taxon>
        <taxon>Pisum</taxon>
    </lineage>
</organism>
<geneLocation type="chloroplast"/>
<dbReference type="EMBL" id="X05029">
    <property type="protein sequence ID" value="CAA28693.1"/>
    <property type="molecule type" value="Genomic_DNA"/>
</dbReference>
<dbReference type="EMBL" id="X15645">
    <property type="protein sequence ID" value="CAA33667.1"/>
    <property type="molecule type" value="Genomic_DNA"/>
</dbReference>
<dbReference type="PIR" id="S04383">
    <property type="entry name" value="R3PM11"/>
</dbReference>
<dbReference type="RefSeq" id="YP_003587584.1">
    <property type="nucleotide sequence ID" value="NC_014057.1"/>
</dbReference>
<dbReference type="SMR" id="P06587"/>
<dbReference type="GeneID" id="9073139"/>
<dbReference type="GO" id="GO:0009507">
    <property type="term" value="C:chloroplast"/>
    <property type="evidence" value="ECO:0007669"/>
    <property type="project" value="UniProtKB-SubCell"/>
</dbReference>
<dbReference type="GO" id="GO:1990904">
    <property type="term" value="C:ribonucleoprotein complex"/>
    <property type="evidence" value="ECO:0007669"/>
    <property type="project" value="UniProtKB-KW"/>
</dbReference>
<dbReference type="GO" id="GO:0005840">
    <property type="term" value="C:ribosome"/>
    <property type="evidence" value="ECO:0007669"/>
    <property type="project" value="UniProtKB-KW"/>
</dbReference>
<dbReference type="GO" id="GO:0019843">
    <property type="term" value="F:rRNA binding"/>
    <property type="evidence" value="ECO:0007669"/>
    <property type="project" value="UniProtKB-UniRule"/>
</dbReference>
<dbReference type="GO" id="GO:0003735">
    <property type="term" value="F:structural constituent of ribosome"/>
    <property type="evidence" value="ECO:0007669"/>
    <property type="project" value="InterPro"/>
</dbReference>
<dbReference type="GO" id="GO:0006412">
    <property type="term" value="P:translation"/>
    <property type="evidence" value="ECO:0007669"/>
    <property type="project" value="UniProtKB-UniRule"/>
</dbReference>
<dbReference type="FunFam" id="3.30.420.80:FF:000003">
    <property type="entry name" value="30S ribosomal protein S11, chloroplastic"/>
    <property type="match status" value="1"/>
</dbReference>
<dbReference type="Gene3D" id="3.30.420.80">
    <property type="entry name" value="Ribosomal protein S11"/>
    <property type="match status" value="1"/>
</dbReference>
<dbReference type="HAMAP" id="MF_01310">
    <property type="entry name" value="Ribosomal_uS11"/>
    <property type="match status" value="1"/>
</dbReference>
<dbReference type="InterPro" id="IPR001971">
    <property type="entry name" value="Ribosomal_uS11"/>
</dbReference>
<dbReference type="InterPro" id="IPR019981">
    <property type="entry name" value="Ribosomal_uS11_bac-type"/>
</dbReference>
<dbReference type="InterPro" id="IPR018102">
    <property type="entry name" value="Ribosomal_uS11_CS"/>
</dbReference>
<dbReference type="InterPro" id="IPR036967">
    <property type="entry name" value="Ribosomal_uS11_sf"/>
</dbReference>
<dbReference type="NCBIfam" id="NF003698">
    <property type="entry name" value="PRK05309.1"/>
    <property type="match status" value="1"/>
</dbReference>
<dbReference type="NCBIfam" id="TIGR03632">
    <property type="entry name" value="uS11_bact"/>
    <property type="match status" value="1"/>
</dbReference>
<dbReference type="PANTHER" id="PTHR11759">
    <property type="entry name" value="40S RIBOSOMAL PROTEIN S14/30S RIBOSOMAL PROTEIN S11"/>
    <property type="match status" value="1"/>
</dbReference>
<dbReference type="Pfam" id="PF00411">
    <property type="entry name" value="Ribosomal_S11"/>
    <property type="match status" value="1"/>
</dbReference>
<dbReference type="PIRSF" id="PIRSF002131">
    <property type="entry name" value="Ribosomal_S11"/>
    <property type="match status" value="1"/>
</dbReference>
<dbReference type="SUPFAM" id="SSF53137">
    <property type="entry name" value="Translational machinery components"/>
    <property type="match status" value="1"/>
</dbReference>
<dbReference type="PROSITE" id="PS00054">
    <property type="entry name" value="RIBOSOMAL_S11"/>
    <property type="match status" value="1"/>
</dbReference>
<accession>P06587</accession>
<feature type="chain" id="PRO_0000123317" description="Small ribosomal subunit protein uS11c">
    <location>
        <begin position="1"/>
        <end position="138"/>
    </location>
</feature>
<feature type="region of interest" description="Disordered" evidence="2">
    <location>
        <begin position="1"/>
        <end position="21"/>
    </location>
</feature>
<feature type="compositionally biased region" description="Basic residues" evidence="2">
    <location>
        <begin position="9"/>
        <end position="21"/>
    </location>
</feature>
<proteinExistence type="inferred from homology"/>
<reference key="1">
    <citation type="journal article" date="1987" name="Nucleic Acids Res.">
        <title>Nucleotide sequence of the gene for ribosomal protein S11 in pea chloroplast DNA.</title>
        <authorList>
            <person name="Purton S."/>
            <person name="Gray J.C."/>
        </authorList>
    </citation>
    <scope>NUCLEOTIDE SEQUENCE [GENOMIC DNA]</scope>
</reference>
<reference key="2">
    <citation type="journal article" date="1989" name="Mol. Gen. Genet.">
        <title>The plastid rpoA gene encoding a protein homologous to the bacterial RNA polymerase alpha subunit is expressed in pea chloroplasts.</title>
        <authorList>
            <person name="Purton S."/>
            <person name="Gray J.C."/>
        </authorList>
    </citation>
    <scope>NUCLEOTIDE SEQUENCE [GENOMIC DNA]</scope>
    <source>
        <strain>cv. Alaska</strain>
    </source>
</reference>
<gene>
    <name evidence="1" type="primary">rps11</name>
</gene>
<sequence>MAKSIPKIGSRKTGRIGSRKHPRKIPKGVIYIQASFNNTIVTVTDVRGRVISWSSAGSCGFKGTRRGTPFAAQTAAGNAIQTVVEQGMQRAEVRIKGPGLGRDAALRAIYRSGILLKVIRDVTPLPHNGCRAPKKRRV</sequence>
<protein>
    <recommendedName>
        <fullName evidence="1">Small ribosomal subunit protein uS11c</fullName>
    </recommendedName>
    <alternativeName>
        <fullName evidence="3">30S ribosomal protein S11, chloroplastic</fullName>
    </alternativeName>
</protein>